<name>SYM_SHEDO</name>
<reference key="1">
    <citation type="submission" date="2006-03" db="EMBL/GenBank/DDBJ databases">
        <title>Complete sequence of Shewanella denitrificans OS217.</title>
        <authorList>
            <consortium name="US DOE Joint Genome Institute"/>
            <person name="Copeland A."/>
            <person name="Lucas S."/>
            <person name="Lapidus A."/>
            <person name="Barry K."/>
            <person name="Detter J.C."/>
            <person name="Glavina del Rio T."/>
            <person name="Hammon N."/>
            <person name="Israni S."/>
            <person name="Dalin E."/>
            <person name="Tice H."/>
            <person name="Pitluck S."/>
            <person name="Brettin T."/>
            <person name="Bruce D."/>
            <person name="Han C."/>
            <person name="Tapia R."/>
            <person name="Gilna P."/>
            <person name="Kiss H."/>
            <person name="Schmutz J."/>
            <person name="Larimer F."/>
            <person name="Land M."/>
            <person name="Hauser L."/>
            <person name="Kyrpides N."/>
            <person name="Lykidis A."/>
            <person name="Richardson P."/>
        </authorList>
    </citation>
    <scope>NUCLEOTIDE SEQUENCE [LARGE SCALE GENOMIC DNA]</scope>
    <source>
        <strain>OS217 / ATCC BAA-1090 / DSM 15013</strain>
    </source>
</reference>
<dbReference type="EC" id="6.1.1.10" evidence="1"/>
<dbReference type="EMBL" id="CP000302">
    <property type="protein sequence ID" value="ABE55338.1"/>
    <property type="molecule type" value="Genomic_DNA"/>
</dbReference>
<dbReference type="RefSeq" id="WP_011496494.1">
    <property type="nucleotide sequence ID" value="NC_007954.1"/>
</dbReference>
<dbReference type="SMR" id="Q12MI8"/>
<dbReference type="STRING" id="318161.Sden_2056"/>
<dbReference type="KEGG" id="sdn:Sden_2056"/>
<dbReference type="eggNOG" id="COG0073">
    <property type="taxonomic scope" value="Bacteria"/>
</dbReference>
<dbReference type="eggNOG" id="COG0143">
    <property type="taxonomic scope" value="Bacteria"/>
</dbReference>
<dbReference type="HOGENOM" id="CLU_009710_7_0_6"/>
<dbReference type="OrthoDB" id="9810191at2"/>
<dbReference type="Proteomes" id="UP000001982">
    <property type="component" value="Chromosome"/>
</dbReference>
<dbReference type="GO" id="GO:0005829">
    <property type="term" value="C:cytosol"/>
    <property type="evidence" value="ECO:0007669"/>
    <property type="project" value="TreeGrafter"/>
</dbReference>
<dbReference type="GO" id="GO:0005524">
    <property type="term" value="F:ATP binding"/>
    <property type="evidence" value="ECO:0007669"/>
    <property type="project" value="UniProtKB-UniRule"/>
</dbReference>
<dbReference type="GO" id="GO:0046872">
    <property type="term" value="F:metal ion binding"/>
    <property type="evidence" value="ECO:0007669"/>
    <property type="project" value="UniProtKB-KW"/>
</dbReference>
<dbReference type="GO" id="GO:0004825">
    <property type="term" value="F:methionine-tRNA ligase activity"/>
    <property type="evidence" value="ECO:0007669"/>
    <property type="project" value="UniProtKB-UniRule"/>
</dbReference>
<dbReference type="GO" id="GO:0000049">
    <property type="term" value="F:tRNA binding"/>
    <property type="evidence" value="ECO:0007669"/>
    <property type="project" value="UniProtKB-KW"/>
</dbReference>
<dbReference type="GO" id="GO:0006431">
    <property type="term" value="P:methionyl-tRNA aminoacylation"/>
    <property type="evidence" value="ECO:0007669"/>
    <property type="project" value="UniProtKB-UniRule"/>
</dbReference>
<dbReference type="CDD" id="cd07957">
    <property type="entry name" value="Anticodon_Ia_Met"/>
    <property type="match status" value="1"/>
</dbReference>
<dbReference type="CDD" id="cd00814">
    <property type="entry name" value="MetRS_core"/>
    <property type="match status" value="1"/>
</dbReference>
<dbReference type="CDD" id="cd02800">
    <property type="entry name" value="tRNA_bind_EcMetRS_like"/>
    <property type="match status" value="1"/>
</dbReference>
<dbReference type="FunFam" id="1.10.730.10:FF:000005">
    <property type="entry name" value="Methionine--tRNA ligase"/>
    <property type="match status" value="1"/>
</dbReference>
<dbReference type="FunFam" id="2.20.28.20:FF:000001">
    <property type="entry name" value="Methionine--tRNA ligase"/>
    <property type="match status" value="1"/>
</dbReference>
<dbReference type="FunFam" id="2.40.50.140:FF:000042">
    <property type="entry name" value="Methionine--tRNA ligase"/>
    <property type="match status" value="1"/>
</dbReference>
<dbReference type="Gene3D" id="3.40.50.620">
    <property type="entry name" value="HUPs"/>
    <property type="match status" value="1"/>
</dbReference>
<dbReference type="Gene3D" id="1.10.730.10">
    <property type="entry name" value="Isoleucyl-tRNA Synthetase, Domain 1"/>
    <property type="match status" value="1"/>
</dbReference>
<dbReference type="Gene3D" id="2.20.28.20">
    <property type="entry name" value="Methionyl-tRNA synthetase, Zn-domain"/>
    <property type="match status" value="1"/>
</dbReference>
<dbReference type="Gene3D" id="2.40.50.140">
    <property type="entry name" value="Nucleic acid-binding proteins"/>
    <property type="match status" value="1"/>
</dbReference>
<dbReference type="HAMAP" id="MF_00098">
    <property type="entry name" value="Met_tRNA_synth_type1"/>
    <property type="match status" value="1"/>
</dbReference>
<dbReference type="InterPro" id="IPR001412">
    <property type="entry name" value="aa-tRNA-synth_I_CS"/>
</dbReference>
<dbReference type="InterPro" id="IPR041872">
    <property type="entry name" value="Anticodon_Met"/>
</dbReference>
<dbReference type="InterPro" id="IPR004495">
    <property type="entry name" value="Met-tRNA-synth_bsu_C"/>
</dbReference>
<dbReference type="InterPro" id="IPR023458">
    <property type="entry name" value="Met-tRNA_ligase_1"/>
</dbReference>
<dbReference type="InterPro" id="IPR014758">
    <property type="entry name" value="Met-tRNA_synth"/>
</dbReference>
<dbReference type="InterPro" id="IPR015413">
    <property type="entry name" value="Methionyl/Leucyl_tRNA_Synth"/>
</dbReference>
<dbReference type="InterPro" id="IPR033911">
    <property type="entry name" value="MetRS_core"/>
</dbReference>
<dbReference type="InterPro" id="IPR029038">
    <property type="entry name" value="MetRS_Zn"/>
</dbReference>
<dbReference type="InterPro" id="IPR012340">
    <property type="entry name" value="NA-bd_OB-fold"/>
</dbReference>
<dbReference type="InterPro" id="IPR014729">
    <property type="entry name" value="Rossmann-like_a/b/a_fold"/>
</dbReference>
<dbReference type="InterPro" id="IPR002547">
    <property type="entry name" value="tRNA-bd_dom"/>
</dbReference>
<dbReference type="InterPro" id="IPR009080">
    <property type="entry name" value="tRNAsynth_Ia_anticodon-bd"/>
</dbReference>
<dbReference type="NCBIfam" id="TIGR00398">
    <property type="entry name" value="metG"/>
    <property type="match status" value="1"/>
</dbReference>
<dbReference type="NCBIfam" id="TIGR00399">
    <property type="entry name" value="metG_C_term"/>
    <property type="match status" value="1"/>
</dbReference>
<dbReference type="NCBIfam" id="NF001100">
    <property type="entry name" value="PRK00133.1"/>
    <property type="match status" value="1"/>
</dbReference>
<dbReference type="PANTHER" id="PTHR45765">
    <property type="entry name" value="METHIONINE--TRNA LIGASE"/>
    <property type="match status" value="1"/>
</dbReference>
<dbReference type="PANTHER" id="PTHR45765:SF1">
    <property type="entry name" value="METHIONINE--TRNA LIGASE, CYTOPLASMIC"/>
    <property type="match status" value="1"/>
</dbReference>
<dbReference type="Pfam" id="PF19303">
    <property type="entry name" value="Anticodon_3"/>
    <property type="match status" value="1"/>
</dbReference>
<dbReference type="Pfam" id="PF09334">
    <property type="entry name" value="tRNA-synt_1g"/>
    <property type="match status" value="1"/>
</dbReference>
<dbReference type="Pfam" id="PF01588">
    <property type="entry name" value="tRNA_bind"/>
    <property type="match status" value="1"/>
</dbReference>
<dbReference type="PRINTS" id="PR01041">
    <property type="entry name" value="TRNASYNTHMET"/>
</dbReference>
<dbReference type="SUPFAM" id="SSF47323">
    <property type="entry name" value="Anticodon-binding domain of a subclass of class I aminoacyl-tRNA synthetases"/>
    <property type="match status" value="1"/>
</dbReference>
<dbReference type="SUPFAM" id="SSF57770">
    <property type="entry name" value="Methionyl-tRNA synthetase (MetRS), Zn-domain"/>
    <property type="match status" value="1"/>
</dbReference>
<dbReference type="SUPFAM" id="SSF50249">
    <property type="entry name" value="Nucleic acid-binding proteins"/>
    <property type="match status" value="1"/>
</dbReference>
<dbReference type="SUPFAM" id="SSF52374">
    <property type="entry name" value="Nucleotidylyl transferase"/>
    <property type="match status" value="1"/>
</dbReference>
<dbReference type="PROSITE" id="PS00178">
    <property type="entry name" value="AA_TRNA_LIGASE_I"/>
    <property type="match status" value="1"/>
</dbReference>
<dbReference type="PROSITE" id="PS50886">
    <property type="entry name" value="TRBD"/>
    <property type="match status" value="1"/>
</dbReference>
<protein>
    <recommendedName>
        <fullName evidence="1">Methionine--tRNA ligase</fullName>
        <ecNumber evidence="1">6.1.1.10</ecNumber>
    </recommendedName>
    <alternativeName>
        <fullName evidence="1">Methionyl-tRNA synthetase</fullName>
        <shortName evidence="1">MetRS</shortName>
    </alternativeName>
</protein>
<keyword id="KW-0030">Aminoacyl-tRNA synthetase</keyword>
<keyword id="KW-0067">ATP-binding</keyword>
<keyword id="KW-0963">Cytoplasm</keyword>
<keyword id="KW-0436">Ligase</keyword>
<keyword id="KW-0479">Metal-binding</keyword>
<keyword id="KW-0547">Nucleotide-binding</keyword>
<keyword id="KW-0648">Protein biosynthesis</keyword>
<keyword id="KW-1185">Reference proteome</keyword>
<keyword id="KW-0694">RNA-binding</keyword>
<keyword id="KW-0820">tRNA-binding</keyword>
<keyword id="KW-0862">Zinc</keyword>
<accession>Q12MI8</accession>
<evidence type="ECO:0000255" key="1">
    <source>
        <dbReference type="HAMAP-Rule" id="MF_00098"/>
    </source>
</evidence>
<evidence type="ECO:0000256" key="2">
    <source>
        <dbReference type="SAM" id="MobiDB-lite"/>
    </source>
</evidence>
<organism>
    <name type="scientific">Shewanella denitrificans (strain OS217 / ATCC BAA-1090 / DSM 15013)</name>
    <dbReference type="NCBI Taxonomy" id="318161"/>
    <lineage>
        <taxon>Bacteria</taxon>
        <taxon>Pseudomonadati</taxon>
        <taxon>Pseudomonadota</taxon>
        <taxon>Gammaproteobacteria</taxon>
        <taxon>Alteromonadales</taxon>
        <taxon>Shewanellaceae</taxon>
        <taxon>Shewanella</taxon>
    </lineage>
</organism>
<sequence length="689" mass="77402">MTQSQRKILVTSALPYANGPIHLGHMLEYIQTDIWSRFQKMRGHECHYICADDAHGTPIMLKAQQLGIAPEAMIAQVQIEHEQDFADFNVAFDNFHSTHSEENRELASDIYIKLRDAGHIKTKTISQLYDPEKSMFLPDRFVKGTCPKCKSDDQYGDNCDSCGATYSTTDLINPRSAVSGATPVMKDTEHFFFDLPAFEGMLKEWIHSGSLQSEMANKLNEWFEQGLQQWDISRDAPYFGFEIPDAPGKYFYVWLDAPIGYMGSFKNFCAKRGDINFDDFWAKDSTAEVYHFIGKDIVYFHSLFWPAMLEGAGLRKPTSVYAHGYVTVNGAKMSKSKGTFIKARTYLDHLDPEYLRYYYAAKLSSRIDDLDLNLEDFAQRVNSDLVGKLVNLASRTAGFISKRFDGKLANVTDNSLAESFIAKQEVIAEFYEAREYGKAMREIMAMADIANGFVAEQAPWQLVKDDDKQAQAHEVCSIALNLFRILTTYLKPVLPRLSQDVEAFMQLELTWDNLAKDMTAHEIAPFKAMMQRVDLDKVAAMVDASKDNLQPTEAPKADKKADKKVEKKATTGDPLTDDPISDEISFEDFAKLDLRIALIAKAEHVADADKLLKLQLDLGGVTKQVFAGIKSAYAPEDLEGKLTVMVANLAPRKMRFGMSEGMVLAAGPGGDELWILEPHQGAKPGMRVK</sequence>
<feature type="chain" id="PRO_0000331905" description="Methionine--tRNA ligase">
    <location>
        <begin position="1"/>
        <end position="689"/>
    </location>
</feature>
<feature type="domain" description="tRNA-binding" evidence="1">
    <location>
        <begin position="588"/>
        <end position="689"/>
    </location>
</feature>
<feature type="region of interest" description="Disordered" evidence="2">
    <location>
        <begin position="546"/>
        <end position="577"/>
    </location>
</feature>
<feature type="short sequence motif" description="'HIGH' region">
    <location>
        <begin position="15"/>
        <end position="25"/>
    </location>
</feature>
<feature type="short sequence motif" description="'KMSKS' region">
    <location>
        <begin position="332"/>
        <end position="336"/>
    </location>
</feature>
<feature type="compositionally biased region" description="Basic and acidic residues" evidence="2">
    <location>
        <begin position="555"/>
        <end position="570"/>
    </location>
</feature>
<feature type="binding site" evidence="1">
    <location>
        <position position="146"/>
    </location>
    <ligand>
        <name>Zn(2+)</name>
        <dbReference type="ChEBI" id="CHEBI:29105"/>
    </ligand>
</feature>
<feature type="binding site" evidence="1">
    <location>
        <position position="149"/>
    </location>
    <ligand>
        <name>Zn(2+)</name>
        <dbReference type="ChEBI" id="CHEBI:29105"/>
    </ligand>
</feature>
<feature type="binding site" evidence="1">
    <location>
        <position position="159"/>
    </location>
    <ligand>
        <name>Zn(2+)</name>
        <dbReference type="ChEBI" id="CHEBI:29105"/>
    </ligand>
</feature>
<feature type="binding site" evidence="1">
    <location>
        <position position="162"/>
    </location>
    <ligand>
        <name>Zn(2+)</name>
        <dbReference type="ChEBI" id="CHEBI:29105"/>
    </ligand>
</feature>
<feature type="binding site" evidence="1">
    <location>
        <position position="335"/>
    </location>
    <ligand>
        <name>ATP</name>
        <dbReference type="ChEBI" id="CHEBI:30616"/>
    </ligand>
</feature>
<proteinExistence type="inferred from homology"/>
<comment type="function">
    <text evidence="1">Is required not only for elongation of protein synthesis but also for the initiation of all mRNA translation through initiator tRNA(fMet) aminoacylation.</text>
</comment>
<comment type="catalytic activity">
    <reaction evidence="1">
        <text>tRNA(Met) + L-methionine + ATP = L-methionyl-tRNA(Met) + AMP + diphosphate</text>
        <dbReference type="Rhea" id="RHEA:13481"/>
        <dbReference type="Rhea" id="RHEA-COMP:9667"/>
        <dbReference type="Rhea" id="RHEA-COMP:9698"/>
        <dbReference type="ChEBI" id="CHEBI:30616"/>
        <dbReference type="ChEBI" id="CHEBI:33019"/>
        <dbReference type="ChEBI" id="CHEBI:57844"/>
        <dbReference type="ChEBI" id="CHEBI:78442"/>
        <dbReference type="ChEBI" id="CHEBI:78530"/>
        <dbReference type="ChEBI" id="CHEBI:456215"/>
        <dbReference type="EC" id="6.1.1.10"/>
    </reaction>
</comment>
<comment type="cofactor">
    <cofactor evidence="1">
        <name>Zn(2+)</name>
        <dbReference type="ChEBI" id="CHEBI:29105"/>
    </cofactor>
    <text evidence="1">Binds 1 zinc ion per subunit.</text>
</comment>
<comment type="subunit">
    <text evidence="1">Homodimer.</text>
</comment>
<comment type="subcellular location">
    <subcellularLocation>
        <location evidence="1">Cytoplasm</location>
    </subcellularLocation>
</comment>
<comment type="similarity">
    <text evidence="1">Belongs to the class-I aminoacyl-tRNA synthetase family. MetG type 1 subfamily.</text>
</comment>
<gene>
    <name evidence="1" type="primary">metG</name>
    <name type="ordered locus">Sden_2056</name>
</gene>